<sequence length="146" mass="15741">MGFTDKQEALVNSSWESFKQNPGNSVLFYTIILEKAPAAKGMFSFLKDSAGVQDSPKLQSHAEKVFGMVRDSAAQLRATGGVVLGDATLGAIHIQKGVVDPHFAVVKEALLKTIKEVSGDKWSEELNTAWEVAYDALATAIKKAMV</sequence>
<accession>P14962</accession>
<accession>Q42929</accession>
<proteinExistence type="evidence at transcript level"/>
<reference key="1">
    <citation type="journal article" date="1987" name="Nucleic Acids Res.">
        <title>Nucleotide sequence of a cDNA clone encoding leghemoglobin III (LbIII) from Medicago sativa.</title>
        <authorList>
            <person name="Kiss G.B."/>
            <person name="Vegh Z."/>
            <person name="Vincze E."/>
        </authorList>
    </citation>
    <scope>NUCLEOTIDE SEQUENCE [MRNA]</scope>
    <scope>TISSUE SPECIFICITY</scope>
    <source>
        <strain>cv. Cardinal</strain>
        <tissue>Root nodule</tissue>
    </source>
</reference>
<reference key="2">
    <citation type="journal article" date="1991" name="Plant Mol. Biol.">
        <title>Sequence analysis of alfalfa (Medicago sativa) leghemoglobin cDNA and genomic clones.</title>
        <authorList>
            <person name="Davidowitz E.J."/>
            <person name="Creissen G."/>
            <person name="Vincze E."/>
            <person name="Kiss G.B."/>
            <person name="Lang-Unnasch N."/>
        </authorList>
    </citation>
    <scope>NUCLEOTIDE SEQUENCE [GENOMIC DNA]</scope>
</reference>
<reference key="3">
    <citation type="journal article" date="1988" name="Plant Mol. Biol.">
        <title>Identification of two groups of leghemoglobin genes in alfalfa (Medicago sativa) and a study of their expression during root nodule development.</title>
        <authorList>
            <person name="Barker D.G."/>
            <person name="Gallusci P."/>
            <person name="Lullien V."/>
            <person name="Khan H."/>
            <person name="Gherardi M."/>
            <person name="Huguet T."/>
        </authorList>
        <dbReference type="AGRICOLA" id="IND91035192"/>
    </citation>
    <scope>NUCLEOTIDE SEQUENCE [MRNA] OF 16-146</scope>
    <scope>TISSUE SPECIFICITY</scope>
    <source>
        <strain>cv. Hybrid 11 X 8</strain>
        <tissue>Root nodule</tissue>
    </source>
</reference>
<name>LGB3_MEDSA</name>
<dbReference type="EMBL" id="X14310">
    <property type="protein sequence ID" value="CAA32491.1"/>
    <property type="molecule type" value="mRNA"/>
</dbReference>
<dbReference type="EMBL" id="M32883">
    <property type="protein sequence ID" value="AAA32659.1"/>
    <property type="molecule type" value="Genomic_DNA"/>
</dbReference>
<dbReference type="EMBL" id="Y00134">
    <property type="protein sequence ID" value="CAA68328.1"/>
    <property type="molecule type" value="mRNA"/>
</dbReference>
<dbReference type="EMBL" id="M36101">
    <property type="protein sequence ID" value="AAA32658.1"/>
    <property type="molecule type" value="mRNA"/>
</dbReference>
<dbReference type="PIR" id="A29282">
    <property type="entry name" value="A29282"/>
</dbReference>
<dbReference type="PIR" id="S08507">
    <property type="entry name" value="S08507"/>
</dbReference>
<dbReference type="SMR" id="P14962"/>
<dbReference type="GO" id="GO:0005829">
    <property type="term" value="C:cytosol"/>
    <property type="evidence" value="ECO:0007669"/>
    <property type="project" value="UniProtKB-SubCell"/>
</dbReference>
<dbReference type="GO" id="GO:0005634">
    <property type="term" value="C:nucleus"/>
    <property type="evidence" value="ECO:0007669"/>
    <property type="project" value="UniProtKB-SubCell"/>
</dbReference>
<dbReference type="GO" id="GO:0020037">
    <property type="term" value="F:heme binding"/>
    <property type="evidence" value="ECO:0007669"/>
    <property type="project" value="InterPro"/>
</dbReference>
<dbReference type="GO" id="GO:0046872">
    <property type="term" value="F:metal ion binding"/>
    <property type="evidence" value="ECO:0007669"/>
    <property type="project" value="UniProtKB-KW"/>
</dbReference>
<dbReference type="GO" id="GO:0019825">
    <property type="term" value="F:oxygen binding"/>
    <property type="evidence" value="ECO:0007669"/>
    <property type="project" value="InterPro"/>
</dbReference>
<dbReference type="GO" id="GO:0005344">
    <property type="term" value="F:oxygen carrier activity"/>
    <property type="evidence" value="ECO:0007669"/>
    <property type="project" value="UniProtKB-KW"/>
</dbReference>
<dbReference type="GO" id="GO:0009877">
    <property type="term" value="P:nodulation"/>
    <property type="evidence" value="ECO:0007669"/>
    <property type="project" value="UniProtKB-KW"/>
</dbReference>
<dbReference type="Gene3D" id="1.10.490.10">
    <property type="entry name" value="Globins"/>
    <property type="match status" value="1"/>
</dbReference>
<dbReference type="InterPro" id="IPR000971">
    <property type="entry name" value="Globin"/>
</dbReference>
<dbReference type="InterPro" id="IPR009050">
    <property type="entry name" value="Globin-like_sf"/>
</dbReference>
<dbReference type="InterPro" id="IPR012292">
    <property type="entry name" value="Globin/Proto"/>
</dbReference>
<dbReference type="InterPro" id="IPR001032">
    <property type="entry name" value="Leghaemoglobin-like"/>
</dbReference>
<dbReference type="InterPro" id="IPR019824">
    <property type="entry name" value="Leghaemoglobin_Fe_BS"/>
</dbReference>
<dbReference type="PANTHER" id="PTHR22924">
    <property type="entry name" value="LEGHEMOGLOBIN-RELATED"/>
    <property type="match status" value="1"/>
</dbReference>
<dbReference type="PANTHER" id="PTHR22924:SF92">
    <property type="entry name" value="NON-SYMBIOTIC HEMOGLOBIN 2"/>
    <property type="match status" value="1"/>
</dbReference>
<dbReference type="Pfam" id="PF00042">
    <property type="entry name" value="Globin"/>
    <property type="match status" value="1"/>
</dbReference>
<dbReference type="PRINTS" id="PR00188">
    <property type="entry name" value="PLANTGLOBIN"/>
</dbReference>
<dbReference type="SUPFAM" id="SSF46458">
    <property type="entry name" value="Globin-like"/>
    <property type="match status" value="1"/>
</dbReference>
<dbReference type="PROSITE" id="PS01033">
    <property type="entry name" value="GLOBIN"/>
    <property type="match status" value="1"/>
</dbReference>
<dbReference type="PROSITE" id="PS00208">
    <property type="entry name" value="PLANT_GLOBIN"/>
    <property type="match status" value="1"/>
</dbReference>
<keyword id="KW-0963">Cytoplasm</keyword>
<keyword id="KW-0349">Heme</keyword>
<keyword id="KW-0408">Iron</keyword>
<keyword id="KW-0479">Metal-binding</keyword>
<keyword id="KW-0944">Nitration</keyword>
<keyword id="KW-0535">Nitrogen fixation</keyword>
<keyword id="KW-0536">Nodulation</keyword>
<keyword id="KW-0539">Nucleus</keyword>
<keyword id="KW-0561">Oxygen transport</keyword>
<keyword id="KW-0597">Phosphoprotein</keyword>
<keyword id="KW-0813">Transport</keyword>
<feature type="initiator methionine" description="Removed" evidence="1">
    <location>
        <position position="1"/>
    </location>
</feature>
<feature type="chain" id="PRO_0000192987" description="Leghemoglobin-3">
    <location>
        <begin position="2"/>
        <end position="146"/>
    </location>
</feature>
<feature type="domain" description="Globin" evidence="7">
    <location>
        <begin position="2"/>
        <end position="146"/>
    </location>
</feature>
<feature type="binding site" evidence="4">
    <location>
        <position position="44"/>
    </location>
    <ligand>
        <name>heme b</name>
        <dbReference type="ChEBI" id="CHEBI:60344"/>
    </ligand>
</feature>
<feature type="binding site" evidence="4">
    <location>
        <position position="61"/>
    </location>
    <ligand>
        <name>O2</name>
        <dbReference type="ChEBI" id="CHEBI:15379"/>
    </ligand>
</feature>
<feature type="binding site" evidence="4">
    <location>
        <position position="64"/>
    </location>
    <ligand>
        <name>heme b</name>
        <dbReference type="ChEBI" id="CHEBI:60344"/>
    </ligand>
</feature>
<feature type="binding site" description="proximal binding residue" evidence="7">
    <location>
        <position position="93"/>
    </location>
    <ligand>
        <name>heme b</name>
        <dbReference type="ChEBI" id="CHEBI:60344"/>
    </ligand>
    <ligandPart>
        <name>Fe</name>
        <dbReference type="ChEBI" id="CHEBI:18248"/>
    </ligandPart>
</feature>
<feature type="binding site" evidence="4">
    <location>
        <position position="96"/>
    </location>
    <ligand>
        <name>heme b</name>
        <dbReference type="ChEBI" id="CHEBI:60344"/>
    </ligand>
</feature>
<feature type="modified residue" description="Nitrated tyrosine" evidence="2">
    <location>
        <position position="29"/>
    </location>
</feature>
<feature type="modified residue" description="Phosphoserine" evidence="5">
    <location>
        <position position="44"/>
    </location>
</feature>
<feature type="modified residue" description="Nitrated tyrosine" evidence="2">
    <location>
        <position position="134"/>
    </location>
</feature>
<feature type="sequence conflict" description="In Ref. 3; CAA32491/AAA32658." evidence="10" ref="3">
    <original>E</original>
    <variation>K</variation>
    <location>
        <position position="16"/>
    </location>
</feature>
<feature type="sequence conflict" description="In Ref. 2; AAA32659." evidence="10" ref="2">
    <location>
        <position position="47"/>
    </location>
</feature>
<evidence type="ECO:0000250" key="1">
    <source>
        <dbReference type="UniProtKB" id="P02233"/>
    </source>
</evidence>
<evidence type="ECO:0000250" key="2">
    <source>
        <dbReference type="UniProtKB" id="P02234"/>
    </source>
</evidence>
<evidence type="ECO:0000250" key="3">
    <source>
        <dbReference type="UniProtKB" id="P02237"/>
    </source>
</evidence>
<evidence type="ECO:0000250" key="4">
    <source>
        <dbReference type="UniProtKB" id="P02240"/>
    </source>
</evidence>
<evidence type="ECO:0000250" key="5">
    <source>
        <dbReference type="UniProtKB" id="Q3C1F7"/>
    </source>
</evidence>
<evidence type="ECO:0000250" key="6">
    <source>
        <dbReference type="UniProtKB" id="Q43296"/>
    </source>
</evidence>
<evidence type="ECO:0000255" key="7">
    <source>
        <dbReference type="PROSITE-ProRule" id="PRU00238"/>
    </source>
</evidence>
<evidence type="ECO:0000269" key="8">
    <source>
    </source>
</evidence>
<evidence type="ECO:0000269" key="9">
    <source ref="3"/>
</evidence>
<evidence type="ECO:0000305" key="10"/>
<organism>
    <name type="scientific">Medicago sativa</name>
    <name type="common">Alfalfa</name>
    <dbReference type="NCBI Taxonomy" id="3879"/>
    <lineage>
        <taxon>Eukaryota</taxon>
        <taxon>Viridiplantae</taxon>
        <taxon>Streptophyta</taxon>
        <taxon>Embryophyta</taxon>
        <taxon>Tracheophyta</taxon>
        <taxon>Spermatophyta</taxon>
        <taxon>Magnoliopsida</taxon>
        <taxon>eudicotyledons</taxon>
        <taxon>Gunneridae</taxon>
        <taxon>Pentapetalae</taxon>
        <taxon>rosids</taxon>
        <taxon>fabids</taxon>
        <taxon>Fabales</taxon>
        <taxon>Fabaceae</taxon>
        <taxon>Papilionoideae</taxon>
        <taxon>50 kb inversion clade</taxon>
        <taxon>NPAAA clade</taxon>
        <taxon>Hologalegina</taxon>
        <taxon>IRL clade</taxon>
        <taxon>Trifolieae</taxon>
        <taxon>Medicago</taxon>
    </lineage>
</organism>
<comment type="function">
    <text evidence="3 6">Leghemoglobin that reversibly binds oxygen O(2) through a pentacoordinated heme iron (By similarity). In root nodules, facilitates the diffusion of oxygen to the bacteroids while preventing the bacterial nitrogenase from being inactivated by buffering dioxygen, nitric oxide and carbon monoxide, and promoting the formation of reactive oxygen species (ROS, e.g. H(2)O(2)) (By similarity). This role is essential for symbiotic nitrogen fixation (SNF) (By similarity).</text>
</comment>
<comment type="subunit">
    <text evidence="4">Monomer.</text>
</comment>
<comment type="subcellular location">
    <subcellularLocation>
        <location evidence="4">Cytoplasm</location>
        <location evidence="4">Cytosol</location>
    </subcellularLocation>
    <subcellularLocation>
        <location evidence="4">Nucleus</location>
    </subcellularLocation>
</comment>
<comment type="tissue specificity">
    <text evidence="8 9">Root nodules.</text>
</comment>
<comment type="PTM">
    <text evidence="2">Nitrated in effective nodules and particularly in hypoxic conditions; this mechanism may play a protective role in the symbiosis by buffering toxic peroxynitrite NO(2)(-). Nitration level decrease during nodule senescence.</text>
</comment>
<comment type="PTM">
    <text evidence="5">Phosphorylation at Ser-44 disrupts the molecular environment of its porphyrin ring oxygen binding pocket, thus leading to a reduced oxygen consumption and to the delivery of oxygen O(2) to symbiosomes.</text>
</comment>
<comment type="similarity">
    <text evidence="10">Belongs to the plant globin family.</text>
</comment>
<protein>
    <recommendedName>
        <fullName>Leghemoglobin-3</fullName>
    </recommendedName>
    <alternativeName>
        <fullName>Leghemoglobin III</fullName>
    </alternativeName>
</protein>